<proteinExistence type="evidence at transcript level"/>
<evidence type="ECO:0000250" key="1">
    <source>
        <dbReference type="UniProtKB" id="O22317"/>
    </source>
</evidence>
<evidence type="ECO:0000250" key="2">
    <source>
        <dbReference type="UniProtKB" id="Q94G86"/>
    </source>
</evidence>
<evidence type="ECO:0000255" key="3"/>
<evidence type="ECO:0000269" key="4">
    <source>
    </source>
</evidence>
<evidence type="ECO:0000269" key="5">
    <source>
    </source>
</evidence>
<evidence type="ECO:0000269" key="6">
    <source>
    </source>
</evidence>
<evidence type="ECO:0000303" key="7">
    <source>
    </source>
</evidence>
<evidence type="ECO:0000303" key="8">
    <source>
    </source>
</evidence>
<evidence type="ECO:0000305" key="9"/>
<evidence type="ECO:0000305" key="10">
    <source>
    </source>
</evidence>
<comment type="function">
    <text evidence="5 10">Probable beta-1,3-glucanase that may be involved in the degradation of callose walls around the microspore tetrad during pollen development (Probable). May be required for pollen exine formation (PubMed:21849515).</text>
</comment>
<comment type="catalytic activity">
    <reaction>
        <text>Hydrolysis of (1-&gt;3)-beta-D-glucosidic linkages in (1-&gt;3)-beta-D-glucans.</text>
        <dbReference type="EC" id="3.2.1.39"/>
    </reaction>
</comment>
<comment type="tissue specificity">
    <text evidence="6">Anthers.</text>
</comment>
<comment type="PTM">
    <text evidence="2">Contains two additional disulfide bonds, but it is unclear if they are between the pairs Cys-409-Cys-416 and Cys-425-Cys-471 or between the pairs Cys-409-Cys-471 and Cys-416-Cys-425.</text>
</comment>
<comment type="disruption phenotype">
    <text evidence="4">Embryonic lethality due to division arrested at one-cell zygotic stage.</text>
</comment>
<comment type="similarity">
    <text evidence="9">Belongs to the glycosyl hydrolase 17 family.</text>
</comment>
<feature type="signal peptide" evidence="3">
    <location>
        <begin position="1"/>
        <end position="20"/>
    </location>
</feature>
<feature type="chain" id="PRO_0000011883" description="Probable glucan endo-1,3-beta-glucosidase A6">
    <location>
        <begin position="21"/>
        <end position="478"/>
    </location>
</feature>
<feature type="active site" description="Proton donor" evidence="1">
    <location>
        <position position="135"/>
    </location>
</feature>
<feature type="active site" description="Nucleophile" evidence="1">
    <location>
        <position position="280"/>
    </location>
</feature>
<feature type="disulfide bond" evidence="2">
    <location>
        <begin position="390"/>
        <end position="453"/>
    </location>
</feature>
<sequence length="478" mass="53472">MSLLAFFLFTILVFSSSCCSATRFQGHRYMQRKTMLDLASKIGINYGRRGNNLPSPYQSINFIKSIKAGHVKLYDADPESLTLLSQTNLYVTITVPNHQITALSSNQTIADEWVRTNILPYYPQTQIRFVLVGNEILSYNSGNVSVNLVPAMRKIVNSLRLHGIHNIKVGTPLAMDSLRSSFPPSNGTFREEITGPVMLPLLKFLNGTNSYFFLNVHPYFRWSRNPMNTSLDFALFQGHSTYTDPQTGLVYRNLLDQMLDSVLFAMTKLGYPHMRLAISETGWPNFGDIDETGANILNAATYNRNLIKKMSASPPIGTPSRPGLPIPTFVFSLFNENQKSGSGTQRHWGILHPDGSPIYDVDFTGQTPLTGFNPLPKPTNNVPYKGQVWCVPVEGANETELEETLRMACAQSNTTCAALAPGRECYEPVSIYWHASYALNSYWAQFRNQSIQCFFNGLAHETTTNPGNDRCKFPSVTL</sequence>
<dbReference type="EC" id="3.2.1.39"/>
<dbReference type="EMBL" id="X70409">
    <property type="protein sequence ID" value="CAA49853.1"/>
    <property type="molecule type" value="Genomic_DNA"/>
</dbReference>
<dbReference type="EMBL" id="Z97335">
    <property type="protein sequence ID" value="CAB10187.1"/>
    <property type="molecule type" value="Genomic_DNA"/>
</dbReference>
<dbReference type="EMBL" id="AL161538">
    <property type="protein sequence ID" value="CAB78450.1"/>
    <property type="molecule type" value="Genomic_DNA"/>
</dbReference>
<dbReference type="EMBL" id="CP002687">
    <property type="protein sequence ID" value="AEE83368.1"/>
    <property type="molecule type" value="Genomic_DNA"/>
</dbReference>
<dbReference type="EMBL" id="AY099580">
    <property type="protein sequence ID" value="AAM20432.1"/>
    <property type="molecule type" value="mRNA"/>
</dbReference>
<dbReference type="EMBL" id="BT002150">
    <property type="protein sequence ID" value="AAN72161.1"/>
    <property type="molecule type" value="mRNA"/>
</dbReference>
<dbReference type="PIR" id="S31906">
    <property type="entry name" value="S31906"/>
</dbReference>
<dbReference type="RefSeq" id="NP_193144.1">
    <property type="nucleotide sequence ID" value="NM_117483.4"/>
</dbReference>
<dbReference type="SMR" id="Q06915"/>
<dbReference type="FunCoup" id="Q06915">
    <property type="interactions" value="2"/>
</dbReference>
<dbReference type="STRING" id="3702.Q06915"/>
<dbReference type="CAZy" id="CBM43">
    <property type="family name" value="Carbohydrate-Binding Module Family 43"/>
</dbReference>
<dbReference type="CAZy" id="GH17">
    <property type="family name" value="Glycoside Hydrolase Family 17"/>
</dbReference>
<dbReference type="GlyGen" id="Q06915">
    <property type="glycosylation" value="1 site"/>
</dbReference>
<dbReference type="PaxDb" id="3702-AT4G14080.1"/>
<dbReference type="ProteomicsDB" id="224708"/>
<dbReference type="EnsemblPlants" id="AT4G14080.1">
    <property type="protein sequence ID" value="AT4G14080.1"/>
    <property type="gene ID" value="AT4G14080"/>
</dbReference>
<dbReference type="GeneID" id="827044"/>
<dbReference type="Gramene" id="AT4G14080.1">
    <property type="protein sequence ID" value="AT4G14080.1"/>
    <property type="gene ID" value="AT4G14080"/>
</dbReference>
<dbReference type="KEGG" id="ath:AT4G14080"/>
<dbReference type="Araport" id="AT4G14080"/>
<dbReference type="TAIR" id="AT4G14080">
    <property type="gene designation" value="MEE48"/>
</dbReference>
<dbReference type="eggNOG" id="ENOG502QRGZ">
    <property type="taxonomic scope" value="Eukaryota"/>
</dbReference>
<dbReference type="HOGENOM" id="CLU_024953_3_4_1"/>
<dbReference type="InParanoid" id="Q06915"/>
<dbReference type="OMA" id="PQTMIRF"/>
<dbReference type="PhylomeDB" id="Q06915"/>
<dbReference type="BioCyc" id="ARA:AT4G14080-MONOMER"/>
<dbReference type="PRO" id="PR:Q06915"/>
<dbReference type="Proteomes" id="UP000006548">
    <property type="component" value="Chromosome 4"/>
</dbReference>
<dbReference type="ExpressionAtlas" id="Q06915">
    <property type="expression patterns" value="baseline and differential"/>
</dbReference>
<dbReference type="GO" id="GO:0042973">
    <property type="term" value="F:glucan endo-1,3-beta-D-glucosidase activity"/>
    <property type="evidence" value="ECO:0007669"/>
    <property type="project" value="UniProtKB-EC"/>
</dbReference>
<dbReference type="GO" id="GO:0005975">
    <property type="term" value="P:carbohydrate metabolic process"/>
    <property type="evidence" value="ECO:0007669"/>
    <property type="project" value="InterPro"/>
</dbReference>
<dbReference type="GO" id="GO:0006952">
    <property type="term" value="P:defense response"/>
    <property type="evidence" value="ECO:0007669"/>
    <property type="project" value="UniProtKB-KW"/>
</dbReference>
<dbReference type="GO" id="GO:0009793">
    <property type="term" value="P:embryo development ending in seed dormancy"/>
    <property type="evidence" value="ECO:0000315"/>
    <property type="project" value="TAIR"/>
</dbReference>
<dbReference type="GO" id="GO:0010584">
    <property type="term" value="P:pollen exine formation"/>
    <property type="evidence" value="ECO:0000315"/>
    <property type="project" value="TAIR"/>
</dbReference>
<dbReference type="FunFam" id="3.20.20.80:FF:000005">
    <property type="entry name" value="Glucan endo-1,3-beta-glucosidase 14"/>
    <property type="match status" value="1"/>
</dbReference>
<dbReference type="Gene3D" id="3.20.20.80">
    <property type="entry name" value="Glycosidases"/>
    <property type="match status" value="1"/>
</dbReference>
<dbReference type="InterPro" id="IPR000490">
    <property type="entry name" value="Glyco_hydro_17"/>
</dbReference>
<dbReference type="InterPro" id="IPR044965">
    <property type="entry name" value="Glyco_hydro_17_plant"/>
</dbReference>
<dbReference type="InterPro" id="IPR017853">
    <property type="entry name" value="Glycoside_hydrolase_SF"/>
</dbReference>
<dbReference type="InterPro" id="IPR012946">
    <property type="entry name" value="X8"/>
</dbReference>
<dbReference type="PANTHER" id="PTHR32227">
    <property type="entry name" value="GLUCAN ENDO-1,3-BETA-GLUCOSIDASE BG1-RELATED-RELATED"/>
    <property type="match status" value="1"/>
</dbReference>
<dbReference type="Pfam" id="PF00332">
    <property type="entry name" value="Glyco_hydro_17"/>
    <property type="match status" value="1"/>
</dbReference>
<dbReference type="Pfam" id="PF07983">
    <property type="entry name" value="X8"/>
    <property type="match status" value="1"/>
</dbReference>
<dbReference type="SMART" id="SM00768">
    <property type="entry name" value="X8"/>
    <property type="match status" value="1"/>
</dbReference>
<dbReference type="SUPFAM" id="SSF51445">
    <property type="entry name" value="(Trans)glycosidases"/>
    <property type="match status" value="1"/>
</dbReference>
<dbReference type="PROSITE" id="PS00587">
    <property type="entry name" value="GLYCOSYL_HYDROL_F17"/>
    <property type="match status" value="1"/>
</dbReference>
<name>EA6_ARATH</name>
<protein>
    <recommendedName>
        <fullName>Probable glucan endo-1,3-beta-glucosidase A6</fullName>
        <ecNumber>3.2.1.39</ecNumber>
    </recommendedName>
    <alternativeName>
        <fullName>(1-&gt;3)-beta-glucan endohydrolase</fullName>
        <shortName>(1-&gt;3)-beta-glucanase</shortName>
    </alternativeName>
    <alternativeName>
        <fullName>Anther-specific protein A6</fullName>
    </alternativeName>
    <alternativeName>
        <fullName>Beta-1,3-endoglucanase</fullName>
    </alternativeName>
    <alternativeName>
        <fullName evidence="7">Protein MATERNAL EFFECT EMBRYO ARREST 48</fullName>
    </alternativeName>
</protein>
<accession>Q06915</accession>
<organism>
    <name type="scientific">Arabidopsis thaliana</name>
    <name type="common">Mouse-ear cress</name>
    <dbReference type="NCBI Taxonomy" id="3702"/>
    <lineage>
        <taxon>Eukaryota</taxon>
        <taxon>Viridiplantae</taxon>
        <taxon>Streptophyta</taxon>
        <taxon>Embryophyta</taxon>
        <taxon>Tracheophyta</taxon>
        <taxon>Spermatophyta</taxon>
        <taxon>Magnoliopsida</taxon>
        <taxon>eudicotyledons</taxon>
        <taxon>Gunneridae</taxon>
        <taxon>Pentapetalae</taxon>
        <taxon>rosids</taxon>
        <taxon>malvids</taxon>
        <taxon>Brassicales</taxon>
        <taxon>Brassicaceae</taxon>
        <taxon>Camelineae</taxon>
        <taxon>Arabidopsis</taxon>
    </lineage>
</organism>
<keyword id="KW-1015">Disulfide bond</keyword>
<keyword id="KW-0326">Glycosidase</keyword>
<keyword id="KW-0378">Hydrolase</keyword>
<keyword id="KW-0611">Plant defense</keyword>
<keyword id="KW-1185">Reference proteome</keyword>
<keyword id="KW-0732">Signal</keyword>
<gene>
    <name evidence="8" type="primary">A6</name>
    <name evidence="7" type="synonym">MEE48</name>
    <name type="ordered locus">At4g14080</name>
    <name type="ORF">dl3080c</name>
</gene>
<reference key="1">
    <citation type="journal article" date="1993" name="Plant J.">
        <title>The anther-specific protein encoded by the Brassica napus and Arabidopsis thaliana A6 gene displays similarity to beta-1,3-glucanases.</title>
        <authorList>
            <person name="Hird D.L."/>
            <person name="Worrall D."/>
            <person name="Hodge R."/>
            <person name="Smartt S."/>
            <person name="Paul W."/>
            <person name="Scott R."/>
        </authorList>
    </citation>
    <scope>NUCLEOTIDE SEQUENCE [GENOMIC DNA]</scope>
    <scope>FUNCTION</scope>
    <scope>TISSUE SPECIFICITY</scope>
</reference>
<reference key="2">
    <citation type="journal article" date="1998" name="Nature">
        <title>Analysis of 1.9 Mb of contiguous sequence from chromosome 4 of Arabidopsis thaliana.</title>
        <authorList>
            <person name="Bevan M."/>
            <person name="Bancroft I."/>
            <person name="Bent E."/>
            <person name="Love K."/>
            <person name="Goodman H.M."/>
            <person name="Dean C."/>
            <person name="Bergkamp R."/>
            <person name="Dirkse W."/>
            <person name="van Staveren M."/>
            <person name="Stiekema W."/>
            <person name="Drost L."/>
            <person name="Ridley P."/>
            <person name="Hudson S.-A."/>
            <person name="Patel K."/>
            <person name="Murphy G."/>
            <person name="Piffanelli P."/>
            <person name="Wedler H."/>
            <person name="Wedler E."/>
            <person name="Wambutt R."/>
            <person name="Weitzenegger T."/>
            <person name="Pohl T."/>
            <person name="Terryn N."/>
            <person name="Gielen J."/>
            <person name="Villarroel R."/>
            <person name="De Clercq R."/>
            <person name="van Montagu M."/>
            <person name="Lecharny A."/>
            <person name="Aubourg S."/>
            <person name="Gy I."/>
            <person name="Kreis M."/>
            <person name="Lao N."/>
            <person name="Kavanagh T."/>
            <person name="Hempel S."/>
            <person name="Kotter P."/>
            <person name="Entian K.-D."/>
            <person name="Rieger M."/>
            <person name="Schaefer M."/>
            <person name="Funk B."/>
            <person name="Mueller-Auer S."/>
            <person name="Silvey M."/>
            <person name="James R."/>
            <person name="Monfort A."/>
            <person name="Pons A."/>
            <person name="Puigdomenech P."/>
            <person name="Douka A."/>
            <person name="Voukelatou E."/>
            <person name="Milioni D."/>
            <person name="Hatzopoulos P."/>
            <person name="Piravandi E."/>
            <person name="Obermaier B."/>
            <person name="Hilbert H."/>
            <person name="Duesterhoeft A."/>
            <person name="Moores T."/>
            <person name="Jones J.D.G."/>
            <person name="Eneva T."/>
            <person name="Palme K."/>
            <person name="Benes V."/>
            <person name="Rechmann S."/>
            <person name="Ansorge W."/>
            <person name="Cooke R."/>
            <person name="Berger C."/>
            <person name="Delseny M."/>
            <person name="Voet M."/>
            <person name="Volckaert G."/>
            <person name="Mewes H.-W."/>
            <person name="Klosterman S."/>
            <person name="Schueller C."/>
            <person name="Chalwatzis N."/>
        </authorList>
    </citation>
    <scope>NUCLEOTIDE SEQUENCE [LARGE SCALE GENOMIC DNA]</scope>
    <source>
        <strain>cv. Columbia</strain>
    </source>
</reference>
<reference key="3">
    <citation type="journal article" date="1999" name="Nature">
        <title>Sequence and analysis of chromosome 4 of the plant Arabidopsis thaliana.</title>
        <authorList>
            <person name="Mayer K.F.X."/>
            <person name="Schueller C."/>
            <person name="Wambutt R."/>
            <person name="Murphy G."/>
            <person name="Volckaert G."/>
            <person name="Pohl T."/>
            <person name="Duesterhoeft A."/>
            <person name="Stiekema W."/>
            <person name="Entian K.-D."/>
            <person name="Terryn N."/>
            <person name="Harris B."/>
            <person name="Ansorge W."/>
            <person name="Brandt P."/>
            <person name="Grivell L.A."/>
            <person name="Rieger M."/>
            <person name="Weichselgartner M."/>
            <person name="de Simone V."/>
            <person name="Obermaier B."/>
            <person name="Mache R."/>
            <person name="Mueller M."/>
            <person name="Kreis M."/>
            <person name="Delseny M."/>
            <person name="Puigdomenech P."/>
            <person name="Watson M."/>
            <person name="Schmidtheini T."/>
            <person name="Reichert B."/>
            <person name="Portetelle D."/>
            <person name="Perez-Alonso M."/>
            <person name="Boutry M."/>
            <person name="Bancroft I."/>
            <person name="Vos P."/>
            <person name="Hoheisel J."/>
            <person name="Zimmermann W."/>
            <person name="Wedler H."/>
            <person name="Ridley P."/>
            <person name="Langham S.-A."/>
            <person name="McCullagh B."/>
            <person name="Bilham L."/>
            <person name="Robben J."/>
            <person name="van der Schueren J."/>
            <person name="Grymonprez B."/>
            <person name="Chuang Y.-J."/>
            <person name="Vandenbussche F."/>
            <person name="Braeken M."/>
            <person name="Weltjens I."/>
            <person name="Voet M."/>
            <person name="Bastiaens I."/>
            <person name="Aert R."/>
            <person name="Defoor E."/>
            <person name="Weitzenegger T."/>
            <person name="Bothe G."/>
            <person name="Ramsperger U."/>
            <person name="Hilbert H."/>
            <person name="Braun M."/>
            <person name="Holzer E."/>
            <person name="Brandt A."/>
            <person name="Peters S."/>
            <person name="van Staveren M."/>
            <person name="Dirkse W."/>
            <person name="Mooijman P."/>
            <person name="Klein Lankhorst R."/>
            <person name="Rose M."/>
            <person name="Hauf J."/>
            <person name="Koetter P."/>
            <person name="Berneiser S."/>
            <person name="Hempel S."/>
            <person name="Feldpausch M."/>
            <person name="Lamberth S."/>
            <person name="Van den Daele H."/>
            <person name="De Keyser A."/>
            <person name="Buysshaert C."/>
            <person name="Gielen J."/>
            <person name="Villarroel R."/>
            <person name="De Clercq R."/>
            <person name="van Montagu M."/>
            <person name="Rogers J."/>
            <person name="Cronin A."/>
            <person name="Quail M.A."/>
            <person name="Bray-Allen S."/>
            <person name="Clark L."/>
            <person name="Doggett J."/>
            <person name="Hall S."/>
            <person name="Kay M."/>
            <person name="Lennard N."/>
            <person name="McLay K."/>
            <person name="Mayes R."/>
            <person name="Pettett A."/>
            <person name="Rajandream M.A."/>
            <person name="Lyne M."/>
            <person name="Benes V."/>
            <person name="Rechmann S."/>
            <person name="Borkova D."/>
            <person name="Bloecker H."/>
            <person name="Scharfe M."/>
            <person name="Grimm M."/>
            <person name="Loehnert T.-H."/>
            <person name="Dose S."/>
            <person name="de Haan M."/>
            <person name="Maarse A.C."/>
            <person name="Schaefer M."/>
            <person name="Mueller-Auer S."/>
            <person name="Gabel C."/>
            <person name="Fuchs M."/>
            <person name="Fartmann B."/>
            <person name="Granderath K."/>
            <person name="Dauner D."/>
            <person name="Herzl A."/>
            <person name="Neumann S."/>
            <person name="Argiriou A."/>
            <person name="Vitale D."/>
            <person name="Liguori R."/>
            <person name="Piravandi E."/>
            <person name="Massenet O."/>
            <person name="Quigley F."/>
            <person name="Clabauld G."/>
            <person name="Muendlein A."/>
            <person name="Felber R."/>
            <person name="Schnabl S."/>
            <person name="Hiller R."/>
            <person name="Schmidt W."/>
            <person name="Lecharny A."/>
            <person name="Aubourg S."/>
            <person name="Chefdor F."/>
            <person name="Cooke R."/>
            <person name="Berger C."/>
            <person name="Monfort A."/>
            <person name="Casacuberta E."/>
            <person name="Gibbons T."/>
            <person name="Weber N."/>
            <person name="Vandenbol M."/>
            <person name="Bargues M."/>
            <person name="Terol J."/>
            <person name="Torres A."/>
            <person name="Perez-Perez A."/>
            <person name="Purnelle B."/>
            <person name="Bent E."/>
            <person name="Johnson S."/>
            <person name="Tacon D."/>
            <person name="Jesse T."/>
            <person name="Heijnen L."/>
            <person name="Schwarz S."/>
            <person name="Scholler P."/>
            <person name="Heber S."/>
            <person name="Francs P."/>
            <person name="Bielke C."/>
            <person name="Frishman D."/>
            <person name="Haase D."/>
            <person name="Lemcke K."/>
            <person name="Mewes H.-W."/>
            <person name="Stocker S."/>
            <person name="Zaccaria P."/>
            <person name="Bevan M."/>
            <person name="Wilson R.K."/>
            <person name="de la Bastide M."/>
            <person name="Habermann K."/>
            <person name="Parnell L."/>
            <person name="Dedhia N."/>
            <person name="Gnoj L."/>
            <person name="Schutz K."/>
            <person name="Huang E."/>
            <person name="Spiegel L."/>
            <person name="Sekhon M."/>
            <person name="Murray J."/>
            <person name="Sheet P."/>
            <person name="Cordes M."/>
            <person name="Abu-Threideh J."/>
            <person name="Stoneking T."/>
            <person name="Kalicki J."/>
            <person name="Graves T."/>
            <person name="Harmon G."/>
            <person name="Edwards J."/>
            <person name="Latreille P."/>
            <person name="Courtney L."/>
            <person name="Cloud J."/>
            <person name="Abbott A."/>
            <person name="Scott K."/>
            <person name="Johnson D."/>
            <person name="Minx P."/>
            <person name="Bentley D."/>
            <person name="Fulton B."/>
            <person name="Miller N."/>
            <person name="Greco T."/>
            <person name="Kemp K."/>
            <person name="Kramer J."/>
            <person name="Fulton L."/>
            <person name="Mardis E."/>
            <person name="Dante M."/>
            <person name="Pepin K."/>
            <person name="Hillier L.W."/>
            <person name="Nelson J."/>
            <person name="Spieth J."/>
            <person name="Ryan E."/>
            <person name="Andrews S."/>
            <person name="Geisel C."/>
            <person name="Layman D."/>
            <person name="Du H."/>
            <person name="Ali J."/>
            <person name="Berghoff A."/>
            <person name="Jones K."/>
            <person name="Drone K."/>
            <person name="Cotton M."/>
            <person name="Joshu C."/>
            <person name="Antonoiu B."/>
            <person name="Zidanic M."/>
            <person name="Strong C."/>
            <person name="Sun H."/>
            <person name="Lamar B."/>
            <person name="Yordan C."/>
            <person name="Ma P."/>
            <person name="Zhong J."/>
            <person name="Preston R."/>
            <person name="Vil D."/>
            <person name="Shekher M."/>
            <person name="Matero A."/>
            <person name="Shah R."/>
            <person name="Swaby I.K."/>
            <person name="O'Shaughnessy A."/>
            <person name="Rodriguez M."/>
            <person name="Hoffman J."/>
            <person name="Till S."/>
            <person name="Granat S."/>
            <person name="Shohdy N."/>
            <person name="Hasegawa A."/>
            <person name="Hameed A."/>
            <person name="Lodhi M."/>
            <person name="Johnson A."/>
            <person name="Chen E."/>
            <person name="Marra M.A."/>
            <person name="Martienssen R."/>
            <person name="McCombie W.R."/>
        </authorList>
    </citation>
    <scope>NUCLEOTIDE SEQUENCE [LARGE SCALE GENOMIC DNA]</scope>
    <source>
        <strain>cv. Columbia</strain>
    </source>
</reference>
<reference key="4">
    <citation type="journal article" date="2017" name="Plant J.">
        <title>Araport11: a complete reannotation of the Arabidopsis thaliana reference genome.</title>
        <authorList>
            <person name="Cheng C.Y."/>
            <person name="Krishnakumar V."/>
            <person name="Chan A.P."/>
            <person name="Thibaud-Nissen F."/>
            <person name="Schobel S."/>
            <person name="Town C.D."/>
        </authorList>
    </citation>
    <scope>GENOME REANNOTATION</scope>
    <source>
        <strain>cv. Columbia</strain>
    </source>
</reference>
<reference key="5">
    <citation type="journal article" date="2003" name="Science">
        <title>Empirical analysis of transcriptional activity in the Arabidopsis genome.</title>
        <authorList>
            <person name="Yamada K."/>
            <person name="Lim J."/>
            <person name="Dale J.M."/>
            <person name="Chen H."/>
            <person name="Shinn P."/>
            <person name="Palm C.J."/>
            <person name="Southwick A.M."/>
            <person name="Wu H.C."/>
            <person name="Kim C.J."/>
            <person name="Nguyen M."/>
            <person name="Pham P.K."/>
            <person name="Cheuk R.F."/>
            <person name="Karlin-Newmann G."/>
            <person name="Liu S.X."/>
            <person name="Lam B."/>
            <person name="Sakano H."/>
            <person name="Wu T."/>
            <person name="Yu G."/>
            <person name="Miranda M."/>
            <person name="Quach H.L."/>
            <person name="Tripp M."/>
            <person name="Chang C.H."/>
            <person name="Lee J.M."/>
            <person name="Toriumi M.J."/>
            <person name="Chan M.M."/>
            <person name="Tang C.C."/>
            <person name="Onodera C.S."/>
            <person name="Deng J.M."/>
            <person name="Akiyama K."/>
            <person name="Ansari Y."/>
            <person name="Arakawa T."/>
            <person name="Banh J."/>
            <person name="Banno F."/>
            <person name="Bowser L."/>
            <person name="Brooks S.Y."/>
            <person name="Carninci P."/>
            <person name="Chao Q."/>
            <person name="Choy N."/>
            <person name="Enju A."/>
            <person name="Goldsmith A.D."/>
            <person name="Gurjal M."/>
            <person name="Hansen N.F."/>
            <person name="Hayashizaki Y."/>
            <person name="Johnson-Hopson C."/>
            <person name="Hsuan V.W."/>
            <person name="Iida K."/>
            <person name="Karnes M."/>
            <person name="Khan S."/>
            <person name="Koesema E."/>
            <person name="Ishida J."/>
            <person name="Jiang P.X."/>
            <person name="Jones T."/>
            <person name="Kawai J."/>
            <person name="Kamiya A."/>
            <person name="Meyers C."/>
            <person name="Nakajima M."/>
            <person name="Narusaka M."/>
            <person name="Seki M."/>
            <person name="Sakurai T."/>
            <person name="Satou M."/>
            <person name="Tamse R."/>
            <person name="Vaysberg M."/>
            <person name="Wallender E.K."/>
            <person name="Wong C."/>
            <person name="Yamamura Y."/>
            <person name="Yuan S."/>
            <person name="Shinozaki K."/>
            <person name="Davis R.W."/>
            <person name="Theologis A."/>
            <person name="Ecker J.R."/>
        </authorList>
    </citation>
    <scope>NUCLEOTIDE SEQUENCE [LARGE SCALE MRNA]</scope>
    <source>
        <strain>cv. Columbia</strain>
    </source>
</reference>
<reference key="6">
    <citation type="journal article" date="2005" name="Development">
        <title>Genetic and molecular identification of genes required for female gametophyte development and function in Arabidopsis.</title>
        <authorList>
            <person name="Pagnussat G.C."/>
            <person name="Yu H.-J."/>
            <person name="Ngo Q.A."/>
            <person name="Rajani S."/>
            <person name="Mayalagu S."/>
            <person name="Johnson C.S."/>
            <person name="Capron A."/>
            <person name="Xie L.-F."/>
            <person name="Ye D."/>
            <person name="Sundaresan V."/>
        </authorList>
    </citation>
    <scope>DISRUPTION PHENOTYPE</scope>
</reference>
<reference key="7">
    <citation type="journal article" date="2011" name="Plant Physiol.">
        <title>A large-scale genetic screen in Arabidopsis to identify genes involved in pollen exine production.</title>
        <authorList>
            <person name="Dobritsa A.A."/>
            <person name="Geanconteri A."/>
            <person name="Shrestha J."/>
            <person name="Carlson A."/>
            <person name="Kooyers N."/>
            <person name="Coerper D."/>
            <person name="Urbanczyk-Wochniak E."/>
            <person name="Bench B.J."/>
            <person name="Sumner L.W."/>
            <person name="Swanson R."/>
            <person name="Preuss D."/>
        </authorList>
    </citation>
    <scope>FUNCTION</scope>
</reference>